<reference key="1">
    <citation type="journal article" date="2011" name="PLoS Genet.">
        <title>Genomic analysis of the necrotrophic fungal pathogens Sclerotinia sclerotiorum and Botrytis cinerea.</title>
        <authorList>
            <person name="Amselem J."/>
            <person name="Cuomo C.A."/>
            <person name="van Kan J.A.L."/>
            <person name="Viaud M."/>
            <person name="Benito E.P."/>
            <person name="Couloux A."/>
            <person name="Coutinho P.M."/>
            <person name="de Vries R.P."/>
            <person name="Dyer P.S."/>
            <person name="Fillinger S."/>
            <person name="Fournier E."/>
            <person name="Gout L."/>
            <person name="Hahn M."/>
            <person name="Kohn L."/>
            <person name="Lapalu N."/>
            <person name="Plummer K.M."/>
            <person name="Pradier J.-M."/>
            <person name="Quevillon E."/>
            <person name="Sharon A."/>
            <person name="Simon A."/>
            <person name="ten Have A."/>
            <person name="Tudzynski B."/>
            <person name="Tudzynski P."/>
            <person name="Wincker P."/>
            <person name="Andrew M."/>
            <person name="Anthouard V."/>
            <person name="Beever R.E."/>
            <person name="Beffa R."/>
            <person name="Benoit I."/>
            <person name="Bouzid O."/>
            <person name="Brault B."/>
            <person name="Chen Z."/>
            <person name="Choquer M."/>
            <person name="Collemare J."/>
            <person name="Cotton P."/>
            <person name="Danchin E.G."/>
            <person name="Da Silva C."/>
            <person name="Gautier A."/>
            <person name="Giraud C."/>
            <person name="Giraud T."/>
            <person name="Gonzalez C."/>
            <person name="Grossetete S."/>
            <person name="Gueldener U."/>
            <person name="Henrissat B."/>
            <person name="Howlett B.J."/>
            <person name="Kodira C."/>
            <person name="Kretschmer M."/>
            <person name="Lappartient A."/>
            <person name="Leroch M."/>
            <person name="Levis C."/>
            <person name="Mauceli E."/>
            <person name="Neuveglise C."/>
            <person name="Oeser B."/>
            <person name="Pearson M."/>
            <person name="Poulain J."/>
            <person name="Poussereau N."/>
            <person name="Quesneville H."/>
            <person name="Rascle C."/>
            <person name="Schumacher J."/>
            <person name="Segurens B."/>
            <person name="Sexton A."/>
            <person name="Silva E."/>
            <person name="Sirven C."/>
            <person name="Soanes D.M."/>
            <person name="Talbot N.J."/>
            <person name="Templeton M."/>
            <person name="Yandava C."/>
            <person name="Yarden O."/>
            <person name="Zeng Q."/>
            <person name="Rollins J.A."/>
            <person name="Lebrun M.-H."/>
            <person name="Dickman M."/>
        </authorList>
    </citation>
    <scope>NUCLEOTIDE SEQUENCE [LARGE SCALE GENOMIC DNA]</scope>
    <source>
        <strain>B05.10</strain>
    </source>
</reference>
<reference key="2">
    <citation type="journal article" date="2012" name="Eukaryot. Cell">
        <title>Genome update of Botrytis cinerea strains B05.10 and T4.</title>
        <authorList>
            <person name="Staats M."/>
            <person name="van Kan J.A.L."/>
        </authorList>
    </citation>
    <scope>NUCLEOTIDE SEQUENCE [LARGE SCALE GENOMIC DNA]</scope>
    <scope>GENOME REANNOTATION</scope>
    <source>
        <strain>B05.10</strain>
    </source>
</reference>
<reference key="3">
    <citation type="journal article" date="2017" name="Mol. Plant Pathol.">
        <title>A gapless genome sequence of the fungus Botrytis cinerea.</title>
        <authorList>
            <person name="van Kan J.A.L."/>
            <person name="Stassen J.H.M."/>
            <person name="Mosbach A."/>
            <person name="van der Lee T.A.J."/>
            <person name="Faino L."/>
            <person name="Farmer A.D."/>
            <person name="Papasotiriou D.G."/>
            <person name="Zhou S."/>
            <person name="Seidl M.F."/>
            <person name="Cottam E."/>
            <person name="Edel D."/>
            <person name="Hahn M."/>
            <person name="Schwartz D.C."/>
            <person name="Dietrich R.A."/>
            <person name="Widdison S."/>
            <person name="Scalliet G."/>
        </authorList>
    </citation>
    <scope>NUCLEOTIDE SEQUENCE [LARGE SCALE GENOMIC DNA]</scope>
    <scope>GENOME REANNOTATION</scope>
    <source>
        <strain>B05.10</strain>
    </source>
</reference>
<evidence type="ECO:0000250" key="1"/>
<evidence type="ECO:0000255" key="2"/>
<evidence type="ECO:0000256" key="3">
    <source>
        <dbReference type="SAM" id="MobiDB-lite"/>
    </source>
</evidence>
<evidence type="ECO:0000305" key="4"/>
<comment type="subunit">
    <text evidence="1">Component of the mitochondrial large ribosomal subunit. Mature mitochondrial ribosomes consist of a small (37S) and a large (54S) subunit. The 37S subunit contains at least 33 different proteins and 1 molecule of RNA (15S). The 54S subunit contains at least 45 different proteins and 1 molecule of RNA (21S) (By similarity).</text>
</comment>
<comment type="subcellular location">
    <subcellularLocation>
        <location evidence="1">Mitochondrion</location>
    </subcellularLocation>
</comment>
<comment type="similarity">
    <text evidence="4">Belongs to the universal ribosomal protein uL29 family.</text>
</comment>
<accession>A6SLT9</accession>
<accession>A0A384JNH5</accession>
<dbReference type="EMBL" id="CP009811">
    <property type="protein sequence ID" value="ATZ52139.1"/>
    <property type="molecule type" value="Genomic_DNA"/>
</dbReference>
<dbReference type="SMR" id="A6SLT9"/>
<dbReference type="EnsemblFungi" id="Bcin07g06390.1">
    <property type="protein sequence ID" value="Bcin07p06390.1"/>
    <property type="gene ID" value="Bcin07g06390"/>
</dbReference>
<dbReference type="GeneID" id="5428224"/>
<dbReference type="KEGG" id="bfu:BCIN_07g06390"/>
<dbReference type="VEuPathDB" id="FungiDB:Bcin07g06390"/>
<dbReference type="OMA" id="YAHGRAW"/>
<dbReference type="OrthoDB" id="270763at2759"/>
<dbReference type="Proteomes" id="UP000001798">
    <property type="component" value="Chromosome bcin07"/>
</dbReference>
<dbReference type="GO" id="GO:0005762">
    <property type="term" value="C:mitochondrial large ribosomal subunit"/>
    <property type="evidence" value="ECO:0007669"/>
    <property type="project" value="TreeGrafter"/>
</dbReference>
<dbReference type="GO" id="GO:0003735">
    <property type="term" value="F:structural constituent of ribosome"/>
    <property type="evidence" value="ECO:0007669"/>
    <property type="project" value="InterPro"/>
</dbReference>
<dbReference type="GO" id="GO:0032543">
    <property type="term" value="P:mitochondrial translation"/>
    <property type="evidence" value="ECO:0007669"/>
    <property type="project" value="TreeGrafter"/>
</dbReference>
<dbReference type="Gene3D" id="6.10.330.20">
    <property type="match status" value="1"/>
</dbReference>
<dbReference type="InterPro" id="IPR038340">
    <property type="entry name" value="MRP-L47_sf"/>
</dbReference>
<dbReference type="InterPro" id="IPR010729">
    <property type="entry name" value="Ribosomal_uL29_mit"/>
</dbReference>
<dbReference type="PANTHER" id="PTHR21183:SF18">
    <property type="entry name" value="LARGE RIBOSOMAL SUBUNIT PROTEIN UL29M"/>
    <property type="match status" value="1"/>
</dbReference>
<dbReference type="PANTHER" id="PTHR21183">
    <property type="entry name" value="RIBOSOMAL PROTEIN L47, MITOCHONDRIAL-RELATED"/>
    <property type="match status" value="1"/>
</dbReference>
<dbReference type="Pfam" id="PF06984">
    <property type="entry name" value="MRP-L47"/>
    <property type="match status" value="1"/>
</dbReference>
<sequence>MSTSTVIRPVARSLLQLRKAGNTPPAFLLPCLQSSSTTSSCTQSTSFSTSSTHLYPRDMNRLRGVSTQRRTGPRQPLSVSNAKLPQPVLDESKRLKVKVDENHGLYEFFRHKDKALSTPAEEGSHGRPWSAEELRGKSWEDLHSLWWICCKERNRIATESYERQRLEAGYGDEDAEKRDMTVRRTQRAIKQVLTERYYSWQEAEVIAKDDPEIDFSGEGPLYTPRDFEEEFEEDVLAEAEGEAEPKPAQVTA</sequence>
<name>RM04_BOTFB</name>
<organism>
    <name type="scientific">Botryotinia fuckeliana (strain B05.10)</name>
    <name type="common">Noble rot fungus</name>
    <name type="synonym">Botrytis cinerea</name>
    <dbReference type="NCBI Taxonomy" id="332648"/>
    <lineage>
        <taxon>Eukaryota</taxon>
        <taxon>Fungi</taxon>
        <taxon>Dikarya</taxon>
        <taxon>Ascomycota</taxon>
        <taxon>Pezizomycotina</taxon>
        <taxon>Leotiomycetes</taxon>
        <taxon>Helotiales</taxon>
        <taxon>Sclerotiniaceae</taxon>
        <taxon>Botrytis</taxon>
    </lineage>
</organism>
<protein>
    <recommendedName>
        <fullName evidence="4">Large ribosomal subunit protein uL29m</fullName>
    </recommendedName>
    <alternativeName>
        <fullName>54S ribosomal protein L4, mitochondrial</fullName>
    </alternativeName>
</protein>
<keyword id="KW-0496">Mitochondrion</keyword>
<keyword id="KW-1185">Reference proteome</keyword>
<keyword id="KW-0687">Ribonucleoprotein</keyword>
<keyword id="KW-0689">Ribosomal protein</keyword>
<keyword id="KW-0809">Transit peptide</keyword>
<gene>
    <name type="primary">mrpl4</name>
    <name type="ORF">BC1G_13778</name>
    <name type="ORF">BCIN_07g06390</name>
</gene>
<proteinExistence type="inferred from homology"/>
<feature type="transit peptide" description="Mitochondrion" evidence="2">
    <location>
        <begin position="1"/>
        <end position="39"/>
    </location>
</feature>
<feature type="chain" id="PRO_0000372395" description="Large ribosomal subunit protein uL29m">
    <location>
        <begin position="40"/>
        <end position="252"/>
    </location>
</feature>
<feature type="region of interest" description="Disordered" evidence="3">
    <location>
        <begin position="233"/>
        <end position="252"/>
    </location>
</feature>
<feature type="compositionally biased region" description="Acidic residues" evidence="3">
    <location>
        <begin position="233"/>
        <end position="242"/>
    </location>
</feature>